<gene>
    <name type="primary">eccD4</name>
    <name type="ordered locus">Rv3448</name>
</gene>
<accession>P9WNQ1</accession>
<accession>L0TFN3</accession>
<accession>O33354</accession>
<accession>Q7D5I9</accession>
<feature type="chain" id="PRO_0000393236" description="ESX-4 secretion system protein eccD4">
    <location>
        <begin position="1"/>
        <end position="467"/>
    </location>
</feature>
<feature type="transmembrane region" description="Helical" evidence="2">
    <location>
        <begin position="122"/>
        <end position="142"/>
    </location>
</feature>
<feature type="transmembrane region" description="Helical" evidence="2">
    <location>
        <begin position="152"/>
        <end position="172"/>
    </location>
</feature>
<feature type="transmembrane region" description="Helical" evidence="2">
    <location>
        <begin position="186"/>
        <end position="206"/>
    </location>
</feature>
<feature type="transmembrane region" description="Helical" evidence="2">
    <location>
        <begin position="209"/>
        <end position="229"/>
    </location>
</feature>
<feature type="transmembrane region" description="Helical" evidence="2">
    <location>
        <begin position="241"/>
        <end position="261"/>
    </location>
</feature>
<feature type="transmembrane region" description="Helical" evidence="2">
    <location>
        <begin position="264"/>
        <end position="284"/>
    </location>
</feature>
<feature type="transmembrane region" description="Helical" evidence="2">
    <location>
        <begin position="319"/>
        <end position="339"/>
    </location>
</feature>
<feature type="transmembrane region" description="Helical" evidence="2">
    <location>
        <begin position="344"/>
        <end position="364"/>
    </location>
</feature>
<feature type="transmembrane region" description="Helical" evidence="2">
    <location>
        <begin position="374"/>
        <end position="394"/>
    </location>
</feature>
<feature type="transmembrane region" description="Helical" evidence="2">
    <location>
        <begin position="401"/>
        <end position="421"/>
    </location>
</feature>
<feature type="transmembrane region" description="Helical" evidence="2">
    <location>
        <begin position="439"/>
        <end position="459"/>
    </location>
</feature>
<organism>
    <name type="scientific">Mycobacterium tuberculosis (strain ATCC 25618 / H37Rv)</name>
    <dbReference type="NCBI Taxonomy" id="83332"/>
    <lineage>
        <taxon>Bacteria</taxon>
        <taxon>Bacillati</taxon>
        <taxon>Actinomycetota</taxon>
        <taxon>Actinomycetes</taxon>
        <taxon>Mycobacteriales</taxon>
        <taxon>Mycobacteriaceae</taxon>
        <taxon>Mycobacterium</taxon>
        <taxon>Mycobacterium tuberculosis complex</taxon>
    </lineage>
</organism>
<proteinExistence type="inferred from homology"/>
<sequence>MPTSDPGLRRVTVHAGAQAVDLTLPAAVPVATLIPSIVDILGDRGASPATAARYQLSALGAPALPNATTLAQCGIRDGAVLVLHKSSAQPPTPRCDDVAEAVAAALDTTARPQCQRTTRLSGALAASCITAGGGLMLVRNALGTNVTRYSDATAGVVAAAGLAALLFAVIACRTYRDPIAGLTLSVIATIFGAVAGLLAVPGVPGVHSVLVAAMAAAATSVLAMRITGCGGITLTAVACCAVVVAAATLVGAITAAPVPAIGSLATLASFGLLEVSARMAVLLAGLSPRLPPALNPDDADALPTTDRLTTRANRADAWLTSLLAAFAASATIGAIGTAVATHGIHRSSMGGIALAAVTGALLLLRARSADTRRSLVFAICGITTVATAFTVAADRALEHGPWIAALTAMLAAVAMFLGFVAPALSLSPVTYRTIELLECLALIAMVPLTAWLCGAYSAVRHLDLTWT</sequence>
<dbReference type="EMBL" id="AL123456">
    <property type="protein sequence ID" value="CCP46270.1"/>
    <property type="molecule type" value="Genomic_DNA"/>
</dbReference>
<dbReference type="PIR" id="E70564">
    <property type="entry name" value="E70564"/>
</dbReference>
<dbReference type="RefSeq" id="NP_217965.1">
    <property type="nucleotide sequence ID" value="NC_000962.3"/>
</dbReference>
<dbReference type="RefSeq" id="WP_003900062.1">
    <property type="nucleotide sequence ID" value="NZ_NVQJ01000065.1"/>
</dbReference>
<dbReference type="SMR" id="P9WNQ1"/>
<dbReference type="STRING" id="83332.Rv3448"/>
<dbReference type="PaxDb" id="83332-Rv3448"/>
<dbReference type="DNASU" id="887624"/>
<dbReference type="GeneID" id="887624"/>
<dbReference type="KEGG" id="mtu:Rv3448"/>
<dbReference type="KEGG" id="mtv:RVBD_3448"/>
<dbReference type="TubercuList" id="Rv3448"/>
<dbReference type="eggNOG" id="ENOG502ZAY5">
    <property type="taxonomic scope" value="Bacteria"/>
</dbReference>
<dbReference type="InParanoid" id="P9WNQ1"/>
<dbReference type="OrthoDB" id="4156660at2"/>
<dbReference type="Proteomes" id="UP000001584">
    <property type="component" value="Chromosome"/>
</dbReference>
<dbReference type="GO" id="GO:0009274">
    <property type="term" value="C:peptidoglycan-based cell wall"/>
    <property type="evidence" value="ECO:0007005"/>
    <property type="project" value="MTBBASE"/>
</dbReference>
<dbReference type="GO" id="GO:0005886">
    <property type="term" value="C:plasma membrane"/>
    <property type="evidence" value="ECO:0007669"/>
    <property type="project" value="UniProtKB-SubCell"/>
</dbReference>
<dbReference type="Gene3D" id="3.10.20.90">
    <property type="entry name" value="Phosphatidylinositol 3-kinase Catalytic Subunit, Chain A, domain 1"/>
    <property type="match status" value="1"/>
</dbReference>
<dbReference type="InterPro" id="IPR044049">
    <property type="entry name" value="EccD_transm"/>
</dbReference>
<dbReference type="InterPro" id="IPR006707">
    <property type="entry name" value="T7SS_EccD"/>
</dbReference>
<dbReference type="InterPro" id="IPR024962">
    <property type="entry name" value="YukD-like"/>
</dbReference>
<dbReference type="NCBIfam" id="TIGR03920">
    <property type="entry name" value="T7SS_EccD"/>
    <property type="match status" value="1"/>
</dbReference>
<dbReference type="Pfam" id="PF19053">
    <property type="entry name" value="EccD"/>
    <property type="match status" value="1"/>
</dbReference>
<dbReference type="Pfam" id="PF08817">
    <property type="entry name" value="YukD"/>
    <property type="match status" value="1"/>
</dbReference>
<dbReference type="PIRSF" id="PIRSF017804">
    <property type="entry name" value="Secretion_EccD1"/>
    <property type="match status" value="1"/>
</dbReference>
<reference key="1">
    <citation type="journal article" date="1998" name="Nature">
        <title>Deciphering the biology of Mycobacterium tuberculosis from the complete genome sequence.</title>
        <authorList>
            <person name="Cole S.T."/>
            <person name="Brosch R."/>
            <person name="Parkhill J."/>
            <person name="Garnier T."/>
            <person name="Churcher C.M."/>
            <person name="Harris D.E."/>
            <person name="Gordon S.V."/>
            <person name="Eiglmeier K."/>
            <person name="Gas S."/>
            <person name="Barry C.E. III"/>
            <person name="Tekaia F."/>
            <person name="Badcock K."/>
            <person name="Basham D."/>
            <person name="Brown D."/>
            <person name="Chillingworth T."/>
            <person name="Connor R."/>
            <person name="Davies R.M."/>
            <person name="Devlin K."/>
            <person name="Feltwell T."/>
            <person name="Gentles S."/>
            <person name="Hamlin N."/>
            <person name="Holroyd S."/>
            <person name="Hornsby T."/>
            <person name="Jagels K."/>
            <person name="Krogh A."/>
            <person name="McLean J."/>
            <person name="Moule S."/>
            <person name="Murphy L.D."/>
            <person name="Oliver S."/>
            <person name="Osborne J."/>
            <person name="Quail M.A."/>
            <person name="Rajandream M.A."/>
            <person name="Rogers J."/>
            <person name="Rutter S."/>
            <person name="Seeger K."/>
            <person name="Skelton S."/>
            <person name="Squares S."/>
            <person name="Squares R."/>
            <person name="Sulston J.E."/>
            <person name="Taylor K."/>
            <person name="Whitehead S."/>
            <person name="Barrell B.G."/>
        </authorList>
    </citation>
    <scope>NUCLEOTIDE SEQUENCE [LARGE SCALE GENOMIC DNA]</scope>
    <source>
        <strain>ATCC 25618 / H37Rv</strain>
    </source>
</reference>
<reference key="2">
    <citation type="journal article" date="2008" name="BMC Syst. Biol.">
        <title>targetTB: a target identification pipeline for Mycobacterium tuberculosis through an interactome, reactome and genome-scale structural analysis.</title>
        <authorList>
            <person name="Raman K."/>
            <person name="Yeturu K."/>
            <person name="Chandra N."/>
        </authorList>
    </citation>
    <scope>IDENTIFICATION AS A DRUG TARGET [LARGE SCALE ANALYSIS]</scope>
</reference>
<reference key="3">
    <citation type="journal article" date="2009" name="PLoS Pathog.">
        <title>Systematic genetic nomenclature for type VII secretion systems.</title>
        <authorList>
            <person name="Bitter W."/>
            <person name="Houben E.N."/>
            <person name="Bottai D."/>
            <person name="Brodin P."/>
            <person name="Brown E.J."/>
            <person name="Cox J.S."/>
            <person name="Derbyshire K."/>
            <person name="Fortune S.M."/>
            <person name="Gao L.Y."/>
            <person name="Liu J."/>
            <person name="Gey van Pittius N.C."/>
            <person name="Pym A.S."/>
            <person name="Rubin E.J."/>
            <person name="Sherman D.R."/>
            <person name="Cole S.T."/>
            <person name="Brosch R."/>
        </authorList>
    </citation>
    <scope>GENE NAME</scope>
</reference>
<name>ECCD4_MYCTU</name>
<keyword id="KW-1003">Cell membrane</keyword>
<keyword id="KW-0472">Membrane</keyword>
<keyword id="KW-1185">Reference proteome</keyword>
<keyword id="KW-0812">Transmembrane</keyword>
<keyword id="KW-1133">Transmembrane helix</keyword>
<protein>
    <recommendedName>
        <fullName>ESX-4 secretion system protein eccD4</fullName>
    </recommendedName>
    <alternativeName>
        <fullName>ESX conserved component D4</fullName>
    </alternativeName>
    <alternativeName>
        <fullName>Type VII secretion system protein eccD4</fullName>
        <shortName>T7SS protein eccD4</shortName>
    </alternativeName>
</protein>
<evidence type="ECO:0000250" key="1"/>
<evidence type="ECO:0000255" key="2"/>
<evidence type="ECO:0000305" key="3"/>
<comment type="subunit">
    <text evidence="1">Part of the ESX-4 / type VII secretion system (T7SS), which is composed of cytosolic and membrane components.</text>
</comment>
<comment type="subcellular location">
    <subcellularLocation>
        <location evidence="3">Cell membrane</location>
        <topology evidence="3">Multi-pass membrane protein</topology>
    </subcellularLocation>
</comment>
<comment type="miscellaneous">
    <text>Was identified as a high-confidence drug target.</text>
</comment>
<comment type="similarity">
    <text evidence="3">Belongs to the EccD/Snm4 family.</text>
</comment>